<protein>
    <recommendedName>
        <fullName evidence="2">Small ribosomal subunit protein uS12c</fullName>
    </recommendedName>
    <alternativeName>
        <fullName>30S ribosomal protein S12, chloroplastic</fullName>
    </alternativeName>
</protein>
<keyword id="KW-0150">Chloroplast</keyword>
<keyword id="KW-0934">Plastid</keyword>
<keyword id="KW-0687">Ribonucleoprotein</keyword>
<keyword id="KW-0689">Ribosomal protein</keyword>
<keyword id="KW-0694">RNA-binding</keyword>
<keyword id="KW-0699">rRNA-binding</keyword>
<reference key="1">
    <citation type="journal article" date="2007" name="Mol. Biol. Evol.">
        <title>The complete chloroplast genome of the chlorarachniophyte Bigelowiella natans: evidence for independent origins of chlorarachniophyte and euglenid secondary endosymbionts.</title>
        <authorList>
            <person name="Rogers M.B."/>
            <person name="Gilson P.R."/>
            <person name="Su V."/>
            <person name="McFadden G.I."/>
            <person name="Keeling P.J."/>
        </authorList>
    </citation>
    <scope>NUCLEOTIDE SEQUENCE [LARGE SCALE GENOMIC DNA]</scope>
</reference>
<dbReference type="EMBL" id="DQ851108">
    <property type="protein sequence ID" value="ABG91427.1"/>
    <property type="molecule type" value="Genomic_DNA"/>
</dbReference>
<dbReference type="RefSeq" id="YP_778595.1">
    <property type="nucleotide sequence ID" value="NC_008408.1"/>
</dbReference>
<dbReference type="SMR" id="Q06J32"/>
<dbReference type="GeneID" id="4353012"/>
<dbReference type="GO" id="GO:0009507">
    <property type="term" value="C:chloroplast"/>
    <property type="evidence" value="ECO:0007669"/>
    <property type="project" value="UniProtKB-SubCell"/>
</dbReference>
<dbReference type="GO" id="GO:0015935">
    <property type="term" value="C:small ribosomal subunit"/>
    <property type="evidence" value="ECO:0007669"/>
    <property type="project" value="InterPro"/>
</dbReference>
<dbReference type="GO" id="GO:0019843">
    <property type="term" value="F:rRNA binding"/>
    <property type="evidence" value="ECO:0007669"/>
    <property type="project" value="UniProtKB-UniRule"/>
</dbReference>
<dbReference type="GO" id="GO:0003735">
    <property type="term" value="F:structural constituent of ribosome"/>
    <property type="evidence" value="ECO:0007669"/>
    <property type="project" value="InterPro"/>
</dbReference>
<dbReference type="GO" id="GO:0006412">
    <property type="term" value="P:translation"/>
    <property type="evidence" value="ECO:0007669"/>
    <property type="project" value="UniProtKB-UniRule"/>
</dbReference>
<dbReference type="CDD" id="cd03368">
    <property type="entry name" value="Ribosomal_S12"/>
    <property type="match status" value="1"/>
</dbReference>
<dbReference type="FunFam" id="2.40.50.140:FF:000001">
    <property type="entry name" value="30S ribosomal protein S12"/>
    <property type="match status" value="1"/>
</dbReference>
<dbReference type="Gene3D" id="2.40.50.140">
    <property type="entry name" value="Nucleic acid-binding proteins"/>
    <property type="match status" value="1"/>
</dbReference>
<dbReference type="HAMAP" id="MF_00403_B">
    <property type="entry name" value="Ribosomal_uS12_B"/>
    <property type="match status" value="1"/>
</dbReference>
<dbReference type="InterPro" id="IPR012340">
    <property type="entry name" value="NA-bd_OB-fold"/>
</dbReference>
<dbReference type="InterPro" id="IPR006032">
    <property type="entry name" value="Ribosomal_uS12"/>
</dbReference>
<dbReference type="InterPro" id="IPR005679">
    <property type="entry name" value="Ribosomal_uS12_bac"/>
</dbReference>
<dbReference type="NCBIfam" id="TIGR00981">
    <property type="entry name" value="rpsL_bact"/>
    <property type="match status" value="1"/>
</dbReference>
<dbReference type="PANTHER" id="PTHR11652">
    <property type="entry name" value="30S RIBOSOMAL PROTEIN S12 FAMILY MEMBER"/>
    <property type="match status" value="1"/>
</dbReference>
<dbReference type="Pfam" id="PF00164">
    <property type="entry name" value="Ribosom_S12_S23"/>
    <property type="match status" value="1"/>
</dbReference>
<dbReference type="PIRSF" id="PIRSF002133">
    <property type="entry name" value="Ribosomal_S12/S23"/>
    <property type="match status" value="1"/>
</dbReference>
<dbReference type="PRINTS" id="PR01034">
    <property type="entry name" value="RIBOSOMALS12"/>
</dbReference>
<dbReference type="SUPFAM" id="SSF50249">
    <property type="entry name" value="Nucleic acid-binding proteins"/>
    <property type="match status" value="1"/>
</dbReference>
<dbReference type="PROSITE" id="PS00055">
    <property type="entry name" value="RIBOSOMAL_S12"/>
    <property type="match status" value="1"/>
</dbReference>
<feature type="chain" id="PRO_0000296084" description="Small ribosomal subunit protein uS12c">
    <location>
        <begin position="1"/>
        <end position="121"/>
    </location>
</feature>
<geneLocation type="chloroplast"/>
<name>RR12_BIGNA</name>
<sequence length="121" mass="13569">MPTIQQLIRSSRKKITKKTKSPALKMCPQRRGVCSRVYTTTPKKPNSALRKVARIKLTSGFEVTAYIPGIGHNLQEHSVVLIRGGRVKDLPGVRYHIIRGTLDTSAVKDRIRSRSKYGVSK</sequence>
<comment type="function">
    <text evidence="1">With S4 and S5 plays an important role in translational accuracy. Located at the interface of the 30S and 50S subunits (By similarity).</text>
</comment>
<comment type="subunit">
    <text evidence="1">Part of the 30S ribosomal subunit.</text>
</comment>
<comment type="subcellular location">
    <subcellularLocation>
        <location>Plastid</location>
        <location>Chloroplast</location>
    </subcellularLocation>
</comment>
<comment type="similarity">
    <text evidence="2">Belongs to the universal ribosomal protein uS12 family.</text>
</comment>
<organism>
    <name type="scientific">Bigelowiella natans</name>
    <name type="common">Pedinomonas minutissima</name>
    <name type="synonym">Chlorarachnion sp. (strain CCMP621)</name>
    <dbReference type="NCBI Taxonomy" id="227086"/>
    <lineage>
        <taxon>Eukaryota</taxon>
        <taxon>Sar</taxon>
        <taxon>Rhizaria</taxon>
        <taxon>Cercozoa</taxon>
        <taxon>Chlorarachniophyceae</taxon>
        <taxon>Bigelowiella</taxon>
    </lineage>
</organism>
<proteinExistence type="inferred from homology"/>
<evidence type="ECO:0000250" key="1"/>
<evidence type="ECO:0000305" key="2"/>
<accession>Q06J32</accession>
<gene>
    <name type="primary">rps12</name>
</gene>